<reference key="1">
    <citation type="journal article" date="2010" name="Genome Biol. Evol.">
        <title>Continuing evolution of Burkholderia mallei through genome reduction and large-scale rearrangements.</title>
        <authorList>
            <person name="Losada L."/>
            <person name="Ronning C.M."/>
            <person name="DeShazer D."/>
            <person name="Woods D."/>
            <person name="Fedorova N."/>
            <person name="Kim H.S."/>
            <person name="Shabalina S.A."/>
            <person name="Pearson T.R."/>
            <person name="Brinkac L."/>
            <person name="Tan P."/>
            <person name="Nandi T."/>
            <person name="Crabtree J."/>
            <person name="Badger J."/>
            <person name="Beckstrom-Sternberg S."/>
            <person name="Saqib M."/>
            <person name="Schutzer S.E."/>
            <person name="Keim P."/>
            <person name="Nierman W.C."/>
        </authorList>
    </citation>
    <scope>NUCLEOTIDE SEQUENCE [LARGE SCALE GENOMIC DNA]</scope>
    <source>
        <strain>NCTC 10229</strain>
    </source>
</reference>
<dbReference type="EMBL" id="CP000546">
    <property type="protein sequence ID" value="ABN01825.1"/>
    <property type="molecule type" value="Genomic_DNA"/>
</dbReference>
<dbReference type="RefSeq" id="WP_004193360.1">
    <property type="nucleotide sequence ID" value="NC_008836.1"/>
</dbReference>
<dbReference type="SMR" id="A2S244"/>
<dbReference type="GeneID" id="93173028"/>
<dbReference type="KEGG" id="bml:BMA10229_A0004"/>
<dbReference type="HOGENOM" id="CLU_148710_0_3_4"/>
<dbReference type="Proteomes" id="UP000002283">
    <property type="component" value="Chromosome I"/>
</dbReference>
<dbReference type="GO" id="GO:0022627">
    <property type="term" value="C:cytosolic small ribosomal subunit"/>
    <property type="evidence" value="ECO:0007669"/>
    <property type="project" value="TreeGrafter"/>
</dbReference>
<dbReference type="GO" id="GO:0070181">
    <property type="term" value="F:small ribosomal subunit rRNA binding"/>
    <property type="evidence" value="ECO:0007669"/>
    <property type="project" value="TreeGrafter"/>
</dbReference>
<dbReference type="GO" id="GO:0003735">
    <property type="term" value="F:structural constituent of ribosome"/>
    <property type="evidence" value="ECO:0007669"/>
    <property type="project" value="InterPro"/>
</dbReference>
<dbReference type="GO" id="GO:0006412">
    <property type="term" value="P:translation"/>
    <property type="evidence" value="ECO:0007669"/>
    <property type="project" value="UniProtKB-UniRule"/>
</dbReference>
<dbReference type="Gene3D" id="4.10.640.10">
    <property type="entry name" value="Ribosomal protein S18"/>
    <property type="match status" value="1"/>
</dbReference>
<dbReference type="HAMAP" id="MF_00270">
    <property type="entry name" value="Ribosomal_bS18"/>
    <property type="match status" value="1"/>
</dbReference>
<dbReference type="InterPro" id="IPR001648">
    <property type="entry name" value="Ribosomal_bS18"/>
</dbReference>
<dbReference type="InterPro" id="IPR018275">
    <property type="entry name" value="Ribosomal_bS18_CS"/>
</dbReference>
<dbReference type="InterPro" id="IPR036870">
    <property type="entry name" value="Ribosomal_bS18_sf"/>
</dbReference>
<dbReference type="NCBIfam" id="TIGR00165">
    <property type="entry name" value="S18"/>
    <property type="match status" value="1"/>
</dbReference>
<dbReference type="PANTHER" id="PTHR13479">
    <property type="entry name" value="30S RIBOSOMAL PROTEIN S18"/>
    <property type="match status" value="1"/>
</dbReference>
<dbReference type="PANTHER" id="PTHR13479:SF40">
    <property type="entry name" value="SMALL RIBOSOMAL SUBUNIT PROTEIN BS18M"/>
    <property type="match status" value="1"/>
</dbReference>
<dbReference type="Pfam" id="PF01084">
    <property type="entry name" value="Ribosomal_S18"/>
    <property type="match status" value="1"/>
</dbReference>
<dbReference type="PRINTS" id="PR00974">
    <property type="entry name" value="RIBOSOMALS18"/>
</dbReference>
<dbReference type="SUPFAM" id="SSF46911">
    <property type="entry name" value="Ribosomal protein S18"/>
    <property type="match status" value="1"/>
</dbReference>
<dbReference type="PROSITE" id="PS00057">
    <property type="entry name" value="RIBOSOMAL_S18"/>
    <property type="match status" value="1"/>
</dbReference>
<keyword id="KW-0687">Ribonucleoprotein</keyword>
<keyword id="KW-0689">Ribosomal protein</keyword>
<keyword id="KW-0694">RNA-binding</keyword>
<keyword id="KW-0699">rRNA-binding</keyword>
<proteinExistence type="inferred from homology"/>
<gene>
    <name evidence="1" type="primary">rpsR</name>
    <name type="ordered locus">BMA10229_A0004</name>
</gene>
<evidence type="ECO:0000255" key="1">
    <source>
        <dbReference type="HAMAP-Rule" id="MF_00270"/>
    </source>
</evidence>
<evidence type="ECO:0000305" key="2"/>
<organism>
    <name type="scientific">Burkholderia mallei (strain NCTC 10229)</name>
    <dbReference type="NCBI Taxonomy" id="412022"/>
    <lineage>
        <taxon>Bacteria</taxon>
        <taxon>Pseudomonadati</taxon>
        <taxon>Pseudomonadota</taxon>
        <taxon>Betaproteobacteria</taxon>
        <taxon>Burkholderiales</taxon>
        <taxon>Burkholderiaceae</taxon>
        <taxon>Burkholderia</taxon>
        <taxon>pseudomallei group</taxon>
    </lineage>
</organism>
<comment type="function">
    <text evidence="1">Binds as a heterodimer with protein bS6 to the central domain of the 16S rRNA, where it helps stabilize the platform of the 30S subunit.</text>
</comment>
<comment type="subunit">
    <text evidence="1">Part of the 30S ribosomal subunit. Forms a tight heterodimer with protein bS6.</text>
</comment>
<comment type="similarity">
    <text evidence="1">Belongs to the bacterial ribosomal protein bS18 family.</text>
</comment>
<feature type="chain" id="PRO_1000003461" description="Small ribosomal subunit protein bS18">
    <location>
        <begin position="1"/>
        <end position="91"/>
    </location>
</feature>
<sequence length="91" mass="10613">MARPTGKKFDKRRQQQNPLFKRKKFCRFTAAGVEQIDYKDTETLKDFIGENGKITPARLTGTKAHYQRQLDTAIKRARFLALLPYTDQHKA</sequence>
<name>RS18_BURM9</name>
<accession>A2S244</accession>
<protein>
    <recommendedName>
        <fullName evidence="1">Small ribosomal subunit protein bS18</fullName>
    </recommendedName>
    <alternativeName>
        <fullName evidence="2">30S ribosomal protein S18</fullName>
    </alternativeName>
</protein>